<sequence length="193" mass="20757">MLIALLIILAYVIGSIPSGLIVGKLAKGIDIREHGSGNLGATNAFRTLGVKAGSVVIAADILKGTLAAALPYLLHVPIHPLLAGVAAVIGHVFPVFAKFKGGKAVATSGGVLLFYAPLLFVTMVAVFFVFLFLTKFVSLSSMLTGIYTIIYCLFVKDPYLLVVVTLLTAFVIYRHRANIKRIINKTEPKIKWF</sequence>
<organism>
    <name type="scientific">Bacillus velezensis (strain DSM 23117 / BGSC 10A6 / LMG 26770 / FZB42)</name>
    <name type="common">Bacillus amyloliquefaciens subsp. plantarum</name>
    <dbReference type="NCBI Taxonomy" id="326423"/>
    <lineage>
        <taxon>Bacteria</taxon>
        <taxon>Bacillati</taxon>
        <taxon>Bacillota</taxon>
        <taxon>Bacilli</taxon>
        <taxon>Bacillales</taxon>
        <taxon>Bacillaceae</taxon>
        <taxon>Bacillus</taxon>
        <taxon>Bacillus amyloliquefaciens group</taxon>
    </lineage>
</organism>
<keyword id="KW-1003">Cell membrane</keyword>
<keyword id="KW-0444">Lipid biosynthesis</keyword>
<keyword id="KW-0443">Lipid metabolism</keyword>
<keyword id="KW-0472">Membrane</keyword>
<keyword id="KW-0594">Phospholipid biosynthesis</keyword>
<keyword id="KW-1208">Phospholipid metabolism</keyword>
<keyword id="KW-0808">Transferase</keyword>
<keyword id="KW-0812">Transmembrane</keyword>
<keyword id="KW-1133">Transmembrane helix</keyword>
<reference key="1">
    <citation type="journal article" date="2007" name="Nat. Biotechnol.">
        <title>Comparative analysis of the complete genome sequence of the plant growth-promoting bacterium Bacillus amyloliquefaciens FZB42.</title>
        <authorList>
            <person name="Chen X.H."/>
            <person name="Koumoutsi A."/>
            <person name="Scholz R."/>
            <person name="Eisenreich A."/>
            <person name="Schneider K."/>
            <person name="Heinemeyer I."/>
            <person name="Morgenstern B."/>
            <person name="Voss B."/>
            <person name="Hess W.R."/>
            <person name="Reva O."/>
            <person name="Junge H."/>
            <person name="Voigt B."/>
            <person name="Jungblut P.R."/>
            <person name="Vater J."/>
            <person name="Suessmuth R."/>
            <person name="Liesegang H."/>
            <person name="Strittmatter A."/>
            <person name="Gottschalk G."/>
            <person name="Borriss R."/>
        </authorList>
    </citation>
    <scope>NUCLEOTIDE SEQUENCE [LARGE SCALE GENOMIC DNA]</scope>
    <source>
        <strain>DSM 23117 / BGSC 10A6 / LMG 26770 / FZB42</strain>
    </source>
</reference>
<dbReference type="EC" id="2.3.1.275" evidence="1"/>
<dbReference type="EMBL" id="CP000560">
    <property type="protein sequence ID" value="ABS74151.1"/>
    <property type="molecule type" value="Genomic_DNA"/>
</dbReference>
<dbReference type="RefSeq" id="WP_007410317.1">
    <property type="nucleotide sequence ID" value="NC_009725.2"/>
</dbReference>
<dbReference type="SMR" id="A7Z575"/>
<dbReference type="GeneID" id="93080920"/>
<dbReference type="KEGG" id="bay:RBAM_017880"/>
<dbReference type="HOGENOM" id="CLU_081254_4_0_9"/>
<dbReference type="UniPathway" id="UPA00085"/>
<dbReference type="Proteomes" id="UP000001120">
    <property type="component" value="Chromosome"/>
</dbReference>
<dbReference type="GO" id="GO:0005886">
    <property type="term" value="C:plasma membrane"/>
    <property type="evidence" value="ECO:0007669"/>
    <property type="project" value="UniProtKB-SubCell"/>
</dbReference>
<dbReference type="GO" id="GO:0043772">
    <property type="term" value="F:acyl-phosphate glycerol-3-phosphate acyltransferase activity"/>
    <property type="evidence" value="ECO:0007669"/>
    <property type="project" value="UniProtKB-UniRule"/>
</dbReference>
<dbReference type="GO" id="GO:0008654">
    <property type="term" value="P:phospholipid biosynthetic process"/>
    <property type="evidence" value="ECO:0007669"/>
    <property type="project" value="UniProtKB-UniRule"/>
</dbReference>
<dbReference type="HAMAP" id="MF_01043">
    <property type="entry name" value="PlsY"/>
    <property type="match status" value="1"/>
</dbReference>
<dbReference type="InterPro" id="IPR003811">
    <property type="entry name" value="G3P_acylTferase_PlsY"/>
</dbReference>
<dbReference type="NCBIfam" id="TIGR00023">
    <property type="entry name" value="glycerol-3-phosphate 1-O-acyltransferase PlsY"/>
    <property type="match status" value="1"/>
</dbReference>
<dbReference type="PANTHER" id="PTHR30309:SF0">
    <property type="entry name" value="GLYCEROL-3-PHOSPHATE ACYLTRANSFERASE-RELATED"/>
    <property type="match status" value="1"/>
</dbReference>
<dbReference type="PANTHER" id="PTHR30309">
    <property type="entry name" value="INNER MEMBRANE PROTEIN YGIH"/>
    <property type="match status" value="1"/>
</dbReference>
<dbReference type="Pfam" id="PF02660">
    <property type="entry name" value="G3P_acyltransf"/>
    <property type="match status" value="1"/>
</dbReference>
<dbReference type="SMART" id="SM01207">
    <property type="entry name" value="G3P_acyltransf"/>
    <property type="match status" value="1"/>
</dbReference>
<evidence type="ECO:0000255" key="1">
    <source>
        <dbReference type="HAMAP-Rule" id="MF_01043"/>
    </source>
</evidence>
<comment type="function">
    <text evidence="1">Catalyzes the transfer of an acyl group from acyl-phosphate (acyl-PO(4)) to glycerol-3-phosphate (G3P) to form lysophosphatidic acid (LPA). This enzyme utilizes acyl-phosphate as fatty acyl donor, but not acyl-CoA or acyl-ACP.</text>
</comment>
<comment type="catalytic activity">
    <reaction evidence="1">
        <text>an acyl phosphate + sn-glycerol 3-phosphate = a 1-acyl-sn-glycero-3-phosphate + phosphate</text>
        <dbReference type="Rhea" id="RHEA:34075"/>
        <dbReference type="ChEBI" id="CHEBI:43474"/>
        <dbReference type="ChEBI" id="CHEBI:57597"/>
        <dbReference type="ChEBI" id="CHEBI:57970"/>
        <dbReference type="ChEBI" id="CHEBI:59918"/>
        <dbReference type="EC" id="2.3.1.275"/>
    </reaction>
</comment>
<comment type="pathway">
    <text evidence="1">Lipid metabolism; phospholipid metabolism.</text>
</comment>
<comment type="subunit">
    <text evidence="1">Probably interacts with PlsX.</text>
</comment>
<comment type="subcellular location">
    <subcellularLocation>
        <location evidence="1">Cell membrane</location>
        <topology evidence="1">Multi-pass membrane protein</topology>
    </subcellularLocation>
</comment>
<comment type="similarity">
    <text evidence="1">Belongs to the PlsY family.</text>
</comment>
<proteinExistence type="inferred from homology"/>
<feature type="chain" id="PRO_1000084375" description="Glycerol-3-phosphate acyltransferase">
    <location>
        <begin position="1"/>
        <end position="193"/>
    </location>
</feature>
<feature type="transmembrane region" description="Helical" evidence="1">
    <location>
        <begin position="2"/>
        <end position="22"/>
    </location>
</feature>
<feature type="transmembrane region" description="Helical" evidence="1">
    <location>
        <begin position="76"/>
        <end position="96"/>
    </location>
</feature>
<feature type="transmembrane region" description="Helical" evidence="1">
    <location>
        <begin position="112"/>
        <end position="132"/>
    </location>
</feature>
<feature type="transmembrane region" description="Helical" evidence="1">
    <location>
        <begin position="152"/>
        <end position="172"/>
    </location>
</feature>
<accession>A7Z575</accession>
<gene>
    <name evidence="1" type="primary">plsY</name>
    <name type="ordered locus">RBAM_017880</name>
</gene>
<name>PLSY_BACVZ</name>
<protein>
    <recommendedName>
        <fullName evidence="1">Glycerol-3-phosphate acyltransferase</fullName>
    </recommendedName>
    <alternativeName>
        <fullName evidence="1">Acyl-PO4 G3P acyltransferase</fullName>
    </alternativeName>
    <alternativeName>
        <fullName evidence="1">Acyl-phosphate--glycerol-3-phosphate acyltransferase</fullName>
    </alternativeName>
    <alternativeName>
        <fullName evidence="1">G3P acyltransferase</fullName>
        <shortName evidence="1">GPAT</shortName>
        <ecNumber evidence="1">2.3.1.275</ecNumber>
    </alternativeName>
    <alternativeName>
        <fullName evidence="1">Lysophosphatidic acid synthase</fullName>
        <shortName evidence="1">LPA synthase</shortName>
    </alternativeName>
</protein>